<feature type="chain" id="PRO_0000139784" description="Nitrogen regulatory protein P-II">
    <location>
        <begin position="1"/>
        <end position="111"/>
    </location>
</feature>
<feature type="modified residue" description="O-UMP-tyrosine" evidence="2">
    <location>
        <position position="50"/>
    </location>
</feature>
<sequence length="111" mass="12081">MKKIEAIIKPFKLDEVRSPSGVGLQGITVTEAKGFGRQKGHTELYRGAEYVVDFLPKVKVEVVLADENAEAVIEAIRKAAQTGRIGDGKIFVSNVEEVIRIRTGETGIDAI</sequence>
<reference key="1">
    <citation type="journal article" date="1987" name="Nucleic Acids Res.">
        <title>Tight linkage of glnA and a putative regulatory gene in Rhizobium leguminosarum.</title>
        <authorList>
            <person name="Colonna-Romano S."/>
            <person name="Riccio A."/>
            <person name="Guida M."/>
            <person name="Defez R."/>
            <person name="Lamberti A."/>
            <person name="Iaccarino M."/>
            <person name="Arnold W."/>
            <person name="Priefer U."/>
            <person name="Puehler A."/>
        </authorList>
    </citation>
    <scope>NUCLEOTIDE SEQUENCE [GENOMIC DNA]</scope>
    <source>
        <strain>RCC1001</strain>
    </source>
</reference>
<dbReference type="EMBL" id="X04880">
    <property type="protein sequence ID" value="CAA28568.1"/>
    <property type="molecule type" value="Genomic_DNA"/>
</dbReference>
<dbReference type="PIR" id="B26567">
    <property type="entry name" value="B26567"/>
</dbReference>
<dbReference type="SMR" id="P09827"/>
<dbReference type="GO" id="GO:0005829">
    <property type="term" value="C:cytosol"/>
    <property type="evidence" value="ECO:0007669"/>
    <property type="project" value="TreeGrafter"/>
</dbReference>
<dbReference type="GO" id="GO:0005524">
    <property type="term" value="F:ATP binding"/>
    <property type="evidence" value="ECO:0007669"/>
    <property type="project" value="TreeGrafter"/>
</dbReference>
<dbReference type="GO" id="GO:0030234">
    <property type="term" value="F:enzyme regulator activity"/>
    <property type="evidence" value="ECO:0007669"/>
    <property type="project" value="InterPro"/>
</dbReference>
<dbReference type="GO" id="GO:0009399">
    <property type="term" value="P:nitrogen fixation"/>
    <property type="evidence" value="ECO:0007669"/>
    <property type="project" value="UniProtKB-KW"/>
</dbReference>
<dbReference type="GO" id="GO:0006808">
    <property type="term" value="P:regulation of nitrogen utilization"/>
    <property type="evidence" value="ECO:0007669"/>
    <property type="project" value="InterPro"/>
</dbReference>
<dbReference type="FunFam" id="3.30.70.120:FF:000001">
    <property type="entry name" value="Nitrogen regulatory protein P-II"/>
    <property type="match status" value="1"/>
</dbReference>
<dbReference type="Gene3D" id="3.30.70.120">
    <property type="match status" value="1"/>
</dbReference>
<dbReference type="InterPro" id="IPR002187">
    <property type="entry name" value="N-reg_PII"/>
</dbReference>
<dbReference type="InterPro" id="IPR011322">
    <property type="entry name" value="N-reg_PII-like_a/b"/>
</dbReference>
<dbReference type="InterPro" id="IPR015867">
    <property type="entry name" value="N-reg_PII/ATP_PRibTrfase_C"/>
</dbReference>
<dbReference type="InterPro" id="IPR017918">
    <property type="entry name" value="N-reg_PII_CS"/>
</dbReference>
<dbReference type="InterPro" id="IPR002332">
    <property type="entry name" value="N-reg_PII_urydylation_site"/>
</dbReference>
<dbReference type="PANTHER" id="PTHR30115">
    <property type="entry name" value="NITROGEN REGULATORY PROTEIN P-II"/>
    <property type="match status" value="1"/>
</dbReference>
<dbReference type="PANTHER" id="PTHR30115:SF11">
    <property type="entry name" value="NITROGEN REGULATORY PROTEIN P-II HOMOLOG"/>
    <property type="match status" value="1"/>
</dbReference>
<dbReference type="Pfam" id="PF00543">
    <property type="entry name" value="P-II"/>
    <property type="match status" value="1"/>
</dbReference>
<dbReference type="PIRSF" id="PIRSF039144">
    <property type="entry name" value="GlnB"/>
    <property type="match status" value="1"/>
</dbReference>
<dbReference type="PRINTS" id="PR00340">
    <property type="entry name" value="PIIGLNB"/>
</dbReference>
<dbReference type="SMART" id="SM00938">
    <property type="entry name" value="P-II"/>
    <property type="match status" value="1"/>
</dbReference>
<dbReference type="SUPFAM" id="SSF54913">
    <property type="entry name" value="GlnB-like"/>
    <property type="match status" value="1"/>
</dbReference>
<dbReference type="PROSITE" id="PS00638">
    <property type="entry name" value="PII_GLNB_CTER"/>
    <property type="match status" value="1"/>
</dbReference>
<dbReference type="PROSITE" id="PS51343">
    <property type="entry name" value="PII_GLNB_DOM"/>
    <property type="match status" value="1"/>
</dbReference>
<dbReference type="PROSITE" id="PS00496">
    <property type="entry name" value="PII_GLNB_UMP"/>
    <property type="match status" value="1"/>
</dbReference>
<proteinExistence type="inferred from homology"/>
<keyword id="KW-0535">Nitrogen fixation</keyword>
<keyword id="KW-0547">Nucleotide-binding</keyword>
<keyword id="KW-0597">Phosphoprotein</keyword>
<keyword id="KW-0804">Transcription</keyword>
<keyword id="KW-0805">Transcription regulation</keyword>
<protein>
    <recommendedName>
        <fullName>Nitrogen regulatory protein P-II</fullName>
    </recommendedName>
</protein>
<accession>P09827</accession>
<organism>
    <name type="scientific">Rhizobium leguminosarum bv. viciae</name>
    <dbReference type="NCBI Taxonomy" id="387"/>
    <lineage>
        <taxon>Bacteria</taxon>
        <taxon>Pseudomonadati</taxon>
        <taxon>Pseudomonadota</taxon>
        <taxon>Alphaproteobacteria</taxon>
        <taxon>Hyphomicrobiales</taxon>
        <taxon>Rhizobiaceae</taxon>
        <taxon>Rhizobium/Agrobacterium group</taxon>
        <taxon>Rhizobium</taxon>
    </lineage>
</organism>
<comment type="function">
    <text>In nitrogen-limiting conditions, when the ratio of Gln to 2-ketoglutarate decreases, P-II is uridylylated to P-II-UMP. P-II-UMP allows the deadenylation of glutamine synthetase (GS), thus activating the enzyme. Conversely, in nitrogen excess P-II is deuridylated and promotes the adenylation of GS. P-II indirectly controls the transcription of the GS gene (glnA). P-II prevents NR-II-catalyzed conversion of NR-I to NR-I-phosphate, the transcriptional activator of glnA. When P-II is uridylylated to P-II-UMP, these events are reversed.</text>
</comment>
<comment type="subunit">
    <text evidence="1">Homotrimer.</text>
</comment>
<comment type="similarity">
    <text evidence="2">Belongs to the P(II) protein family.</text>
</comment>
<name>GLNB_RHILV</name>
<evidence type="ECO:0000250" key="1"/>
<evidence type="ECO:0000255" key="2">
    <source>
        <dbReference type="PROSITE-ProRule" id="PRU00675"/>
    </source>
</evidence>
<gene>
    <name type="primary">glnB</name>
</gene>